<name>CLPP_SOLLC</name>
<protein>
    <recommendedName>
        <fullName evidence="1">ATP-dependent Clp protease proteolytic subunit</fullName>
        <ecNumber evidence="1">3.4.21.92</ecNumber>
    </recommendedName>
    <alternativeName>
        <fullName evidence="1">Endopeptidase Clp</fullName>
    </alternativeName>
</protein>
<proteinExistence type="inferred from homology"/>
<keyword id="KW-0150">Chloroplast</keyword>
<keyword id="KW-0378">Hydrolase</keyword>
<keyword id="KW-0934">Plastid</keyword>
<keyword id="KW-0645">Protease</keyword>
<keyword id="KW-1185">Reference proteome</keyword>
<keyword id="KW-0720">Serine protease</keyword>
<accession>Q2MI76</accession>
<sequence>MPIGVPRVVFRNPGDPISSWVDIYNRLYRERLLFLGQGIGTELSNQLIGLMLYLSMEDENKDLYLFVNSPGGWVIPGIAIYDTMQFVRPDIHTICLGLAASMGSFILAGGQLTKRIAFPHARVMIHEPYSGFYMAQVGEFVLEAIEMAKLRETLTRVYAEKTGQPVWVIHEDMERDIFMSATEAQAYGIVDFVAVQGKEHGFHADL</sequence>
<reference key="1">
    <citation type="journal article" date="2006" name="Theor. Appl. Genet.">
        <title>Complete chloroplast genome sequences of Solanum bulbocastanum, Solanum lycopersicum and comparative analyses with other Solanaceae genomes.</title>
        <authorList>
            <person name="Daniell H."/>
            <person name="Lee S.-B."/>
            <person name="Grevich J."/>
            <person name="Saski C."/>
            <person name="Quesada-Vargas T."/>
            <person name="Guda C."/>
            <person name="Tomkins J."/>
            <person name="Jansen R.K."/>
        </authorList>
    </citation>
    <scope>NUCLEOTIDE SEQUENCE [LARGE SCALE GENOMIC DNA]</scope>
    <source>
        <strain>cv. LA3023</strain>
    </source>
</reference>
<reference key="2">
    <citation type="journal article" date="2006" name="J. Mol. Evol.">
        <title>Sequence of the tomato chloroplast DNA and evolutionary comparison of solanaceous plastid genomes.</title>
        <authorList>
            <person name="Kahlau S."/>
            <person name="Aspinall S."/>
            <person name="Gray J.C."/>
            <person name="Bock R."/>
        </authorList>
    </citation>
    <scope>NUCLEOTIDE SEQUENCE [LARGE SCALE GENOMIC DNA]</scope>
    <source>
        <strain>cv. IPA-6</strain>
    </source>
</reference>
<comment type="function">
    <text evidence="1">Cleaves peptides in various proteins in a process that requires ATP hydrolysis. Has a chymotrypsin-like activity. Plays a major role in the degradation of misfolded proteins.</text>
</comment>
<comment type="catalytic activity">
    <reaction evidence="1">
        <text>Hydrolysis of proteins to small peptides in the presence of ATP and magnesium. alpha-casein is the usual test substrate. In the absence of ATP, only oligopeptides shorter than five residues are hydrolyzed (such as succinyl-Leu-Tyr-|-NHMec, and Leu-Tyr-Leu-|-Tyr-Trp, in which cleavage of the -Tyr-|-Leu- and -Tyr-|-Trp bonds also occurs).</text>
        <dbReference type="EC" id="3.4.21.92"/>
    </reaction>
</comment>
<comment type="subunit">
    <text>Component of the chloroplastic Clp protease core complex.</text>
</comment>
<comment type="subcellular location">
    <subcellularLocation>
        <location evidence="1">Plastid</location>
        <location evidence="1">Chloroplast stroma</location>
    </subcellularLocation>
</comment>
<comment type="similarity">
    <text evidence="1">Belongs to the peptidase S14 family.</text>
</comment>
<geneLocation type="chloroplast"/>
<organism>
    <name type="scientific">Solanum lycopersicum</name>
    <name type="common">Tomato</name>
    <name type="synonym">Lycopersicon esculentum</name>
    <dbReference type="NCBI Taxonomy" id="4081"/>
    <lineage>
        <taxon>Eukaryota</taxon>
        <taxon>Viridiplantae</taxon>
        <taxon>Streptophyta</taxon>
        <taxon>Embryophyta</taxon>
        <taxon>Tracheophyta</taxon>
        <taxon>Spermatophyta</taxon>
        <taxon>Magnoliopsida</taxon>
        <taxon>eudicotyledons</taxon>
        <taxon>Gunneridae</taxon>
        <taxon>Pentapetalae</taxon>
        <taxon>asterids</taxon>
        <taxon>lamiids</taxon>
        <taxon>Solanales</taxon>
        <taxon>Solanaceae</taxon>
        <taxon>Solanoideae</taxon>
        <taxon>Solaneae</taxon>
        <taxon>Solanum</taxon>
        <taxon>Solanum subgen. Lycopersicon</taxon>
    </lineage>
</organism>
<evidence type="ECO:0000255" key="1">
    <source>
        <dbReference type="HAMAP-Rule" id="MF_00444"/>
    </source>
</evidence>
<dbReference type="EC" id="3.4.21.92" evidence="1"/>
<dbReference type="EMBL" id="DQ347959">
    <property type="protein sequence ID" value="ABC56324.1"/>
    <property type="molecule type" value="Genomic_DNA"/>
</dbReference>
<dbReference type="EMBL" id="AM087200">
    <property type="protein sequence ID" value="CAJ32419.1"/>
    <property type="molecule type" value="Genomic_DNA"/>
</dbReference>
<dbReference type="RefSeq" id="AP_004953.1">
    <property type="nucleotide sequence ID" value="AC_000188.1"/>
</dbReference>
<dbReference type="RefSeq" id="YP_008563113.1">
    <property type="nucleotide sequence ID" value="NC_007898.3"/>
</dbReference>
<dbReference type="SMR" id="Q2MI76"/>
<dbReference type="FunCoup" id="Q2MI76">
    <property type="interactions" value="10"/>
</dbReference>
<dbReference type="STRING" id="4081.Q2MI76"/>
<dbReference type="MEROPS" id="S14.002"/>
<dbReference type="PaxDb" id="4081-Solyc01g007490.2.1"/>
<dbReference type="GeneID" id="3950455"/>
<dbReference type="KEGG" id="sly:3950455"/>
<dbReference type="eggNOG" id="KOG0840">
    <property type="taxonomic scope" value="Eukaryota"/>
</dbReference>
<dbReference type="InParanoid" id="Q2MI76"/>
<dbReference type="OrthoDB" id="1882605at2759"/>
<dbReference type="Proteomes" id="UP000004994">
    <property type="component" value="Chloroplast"/>
</dbReference>
<dbReference type="ExpressionAtlas" id="Q2MI76">
    <property type="expression patterns" value="baseline"/>
</dbReference>
<dbReference type="GO" id="GO:0009570">
    <property type="term" value="C:chloroplast stroma"/>
    <property type="evidence" value="ECO:0007669"/>
    <property type="project" value="UniProtKB-SubCell"/>
</dbReference>
<dbReference type="GO" id="GO:0009368">
    <property type="term" value="C:endopeptidase Clp complex"/>
    <property type="evidence" value="ECO:0000318"/>
    <property type="project" value="GO_Central"/>
</dbReference>
<dbReference type="GO" id="GO:0004176">
    <property type="term" value="F:ATP-dependent peptidase activity"/>
    <property type="evidence" value="ECO:0000318"/>
    <property type="project" value="GO_Central"/>
</dbReference>
<dbReference type="GO" id="GO:0051117">
    <property type="term" value="F:ATPase binding"/>
    <property type="evidence" value="ECO:0000318"/>
    <property type="project" value="GO_Central"/>
</dbReference>
<dbReference type="GO" id="GO:0004252">
    <property type="term" value="F:serine-type endopeptidase activity"/>
    <property type="evidence" value="ECO:0000318"/>
    <property type="project" value="GO_Central"/>
</dbReference>
<dbReference type="GO" id="GO:0006515">
    <property type="term" value="P:protein quality control for misfolded or incompletely synthesized proteins"/>
    <property type="evidence" value="ECO:0000318"/>
    <property type="project" value="GO_Central"/>
</dbReference>
<dbReference type="CDD" id="cd07017">
    <property type="entry name" value="S14_ClpP_2"/>
    <property type="match status" value="1"/>
</dbReference>
<dbReference type="FunFam" id="3.90.226.10:FF:000006">
    <property type="entry name" value="ATP-dependent Clp protease proteolytic subunit"/>
    <property type="match status" value="1"/>
</dbReference>
<dbReference type="Gene3D" id="3.90.226.10">
    <property type="entry name" value="2-enoyl-CoA Hydratase, Chain A, domain 1"/>
    <property type="match status" value="1"/>
</dbReference>
<dbReference type="HAMAP" id="MF_00444">
    <property type="entry name" value="ClpP"/>
    <property type="match status" value="1"/>
</dbReference>
<dbReference type="InterPro" id="IPR001907">
    <property type="entry name" value="ClpP"/>
</dbReference>
<dbReference type="InterPro" id="IPR029045">
    <property type="entry name" value="ClpP/crotonase-like_dom_sf"/>
</dbReference>
<dbReference type="InterPro" id="IPR023562">
    <property type="entry name" value="ClpP/TepA"/>
</dbReference>
<dbReference type="InterPro" id="IPR018215">
    <property type="entry name" value="ClpP_Ser_AS"/>
</dbReference>
<dbReference type="PANTHER" id="PTHR10381">
    <property type="entry name" value="ATP-DEPENDENT CLP PROTEASE PROTEOLYTIC SUBUNIT"/>
    <property type="match status" value="1"/>
</dbReference>
<dbReference type="PANTHER" id="PTHR10381:SF15">
    <property type="entry name" value="CHLOROPLASTIC ATP-DEPENDENT CLP PROTEASE PROTEOLYTIC SUBUNIT 1"/>
    <property type="match status" value="1"/>
</dbReference>
<dbReference type="Pfam" id="PF00574">
    <property type="entry name" value="CLP_protease"/>
    <property type="match status" value="1"/>
</dbReference>
<dbReference type="PRINTS" id="PR00127">
    <property type="entry name" value="CLPPROTEASEP"/>
</dbReference>
<dbReference type="SUPFAM" id="SSF52096">
    <property type="entry name" value="ClpP/crotonase"/>
    <property type="match status" value="1"/>
</dbReference>
<dbReference type="PROSITE" id="PS00381">
    <property type="entry name" value="CLP_PROTEASE_SER"/>
    <property type="match status" value="1"/>
</dbReference>
<gene>
    <name evidence="1" type="primary">clpP</name>
</gene>
<feature type="chain" id="PRO_0000275302" description="ATP-dependent Clp protease proteolytic subunit">
    <location>
        <begin position="1"/>
        <end position="206"/>
    </location>
</feature>
<feature type="active site" description="Nucleophile" evidence="1">
    <location>
        <position position="101"/>
    </location>
</feature>
<feature type="active site" evidence="1">
    <location>
        <position position="126"/>
    </location>
</feature>